<accession>Q57951</accession>
<name>Y531_METJA</name>
<proteinExistence type="inferred from homology"/>
<dbReference type="EMBL" id="L77117">
    <property type="protein sequence ID" value="AAB98522.1"/>
    <property type="molecule type" value="Genomic_DNA"/>
</dbReference>
<dbReference type="PIR" id="C64366">
    <property type="entry name" value="C64366"/>
</dbReference>
<dbReference type="SMR" id="Q57951"/>
<dbReference type="FunCoup" id="Q57951">
    <property type="interactions" value="14"/>
</dbReference>
<dbReference type="STRING" id="243232.MJ_0531"/>
<dbReference type="PaxDb" id="243232-MJ_0531"/>
<dbReference type="EnsemblBacteria" id="AAB98522">
    <property type="protein sequence ID" value="AAB98522"/>
    <property type="gene ID" value="MJ_0531"/>
</dbReference>
<dbReference type="KEGG" id="mja:MJ_0531"/>
<dbReference type="eggNOG" id="arCOG02053">
    <property type="taxonomic scope" value="Archaea"/>
</dbReference>
<dbReference type="HOGENOM" id="CLU_049301_11_0_2"/>
<dbReference type="InParanoid" id="Q57951"/>
<dbReference type="PhylomeDB" id="Q57951"/>
<dbReference type="Proteomes" id="UP000000805">
    <property type="component" value="Chromosome"/>
</dbReference>
<dbReference type="CDD" id="cd00293">
    <property type="entry name" value="USP-like"/>
    <property type="match status" value="1"/>
</dbReference>
<dbReference type="Gene3D" id="3.40.50.620">
    <property type="entry name" value="HUPs"/>
    <property type="match status" value="1"/>
</dbReference>
<dbReference type="InterPro" id="IPR014729">
    <property type="entry name" value="Rossmann-like_a/b/a_fold"/>
</dbReference>
<dbReference type="InterPro" id="IPR006015">
    <property type="entry name" value="Universal_stress_UspA"/>
</dbReference>
<dbReference type="InterPro" id="IPR006016">
    <property type="entry name" value="UspA"/>
</dbReference>
<dbReference type="PANTHER" id="PTHR46268">
    <property type="entry name" value="STRESS RESPONSE PROTEIN NHAX"/>
    <property type="match status" value="1"/>
</dbReference>
<dbReference type="PANTHER" id="PTHR46268:SF6">
    <property type="entry name" value="UNIVERSAL STRESS PROTEIN UP12"/>
    <property type="match status" value="1"/>
</dbReference>
<dbReference type="Pfam" id="PF00582">
    <property type="entry name" value="Usp"/>
    <property type="match status" value="1"/>
</dbReference>
<dbReference type="PIRSF" id="PIRSF006276">
    <property type="entry name" value="UspA"/>
    <property type="match status" value="1"/>
</dbReference>
<dbReference type="PRINTS" id="PR01438">
    <property type="entry name" value="UNVRSLSTRESS"/>
</dbReference>
<dbReference type="SUPFAM" id="SSF52402">
    <property type="entry name" value="Adenine nucleotide alpha hydrolases-like"/>
    <property type="match status" value="1"/>
</dbReference>
<feature type="chain" id="PRO_0000147445" description="Universal stress protein MJ0531">
    <location>
        <begin position="1"/>
        <end position="170"/>
    </location>
</feature>
<organism>
    <name type="scientific">Methanocaldococcus jannaschii (strain ATCC 43067 / DSM 2661 / JAL-1 / JCM 10045 / NBRC 100440)</name>
    <name type="common">Methanococcus jannaschii</name>
    <dbReference type="NCBI Taxonomy" id="243232"/>
    <lineage>
        <taxon>Archaea</taxon>
        <taxon>Methanobacteriati</taxon>
        <taxon>Methanobacteriota</taxon>
        <taxon>Methanomada group</taxon>
        <taxon>Methanococci</taxon>
        <taxon>Methanococcales</taxon>
        <taxon>Methanocaldococcaceae</taxon>
        <taxon>Methanocaldococcus</taxon>
    </lineage>
</organism>
<gene>
    <name type="ordered locus">MJ0531</name>
</gene>
<protein>
    <recommendedName>
        <fullName>Universal stress protein MJ0531</fullName>
        <shortName>USP MJ0531</shortName>
    </recommendedName>
</protein>
<keyword id="KW-1185">Reference proteome</keyword>
<sequence length="170" mass="18890">MKKVFILLALKYYILNSIIRNGENLYKKIVIPTDGSDVSLEAAKHAINIAKEFDAEVYAIYVVDVSPFVGLPAEGSWELISELLKEEGQEALKKVKKMAEEWGVKIHTEMLEGVPANEIVEFAEKKKADLIVMGTTGKTGLERILLGSVAERVIKNAHCPVLVVKKPKKE</sequence>
<evidence type="ECO:0000305" key="1"/>
<reference key="1">
    <citation type="journal article" date="1996" name="Science">
        <title>Complete genome sequence of the methanogenic archaeon, Methanococcus jannaschii.</title>
        <authorList>
            <person name="Bult C.J."/>
            <person name="White O."/>
            <person name="Olsen G.J."/>
            <person name="Zhou L."/>
            <person name="Fleischmann R.D."/>
            <person name="Sutton G.G."/>
            <person name="Blake J.A."/>
            <person name="FitzGerald L.M."/>
            <person name="Clayton R.A."/>
            <person name="Gocayne J.D."/>
            <person name="Kerlavage A.R."/>
            <person name="Dougherty B.A."/>
            <person name="Tomb J.-F."/>
            <person name="Adams M.D."/>
            <person name="Reich C.I."/>
            <person name="Overbeek R."/>
            <person name="Kirkness E.F."/>
            <person name="Weinstock K.G."/>
            <person name="Merrick J.M."/>
            <person name="Glodek A."/>
            <person name="Scott J.L."/>
            <person name="Geoghagen N.S.M."/>
            <person name="Weidman J.F."/>
            <person name="Fuhrmann J.L."/>
            <person name="Nguyen D."/>
            <person name="Utterback T.R."/>
            <person name="Kelley J.M."/>
            <person name="Peterson J.D."/>
            <person name="Sadow P.W."/>
            <person name="Hanna M.C."/>
            <person name="Cotton M.D."/>
            <person name="Roberts K.M."/>
            <person name="Hurst M.A."/>
            <person name="Kaine B.P."/>
            <person name="Borodovsky M."/>
            <person name="Klenk H.-P."/>
            <person name="Fraser C.M."/>
            <person name="Smith H.O."/>
            <person name="Woese C.R."/>
            <person name="Venter J.C."/>
        </authorList>
    </citation>
    <scope>NUCLEOTIDE SEQUENCE [LARGE SCALE GENOMIC DNA]</scope>
    <source>
        <strain>ATCC 43067 / DSM 2661 / JAL-1 / JCM 10045 / NBRC 100440</strain>
    </source>
</reference>
<comment type="similarity">
    <text evidence="1">Belongs to the universal stress protein A family.</text>
</comment>